<gene>
    <name evidence="10" type="primary">MYOC</name>
    <name evidence="4" type="synonym">TIGR</name>
</gene>
<reference evidence="9 10" key="1">
    <citation type="journal article" date="2003" name="BMC Genet.">
        <title>Characterization of rabbit myocilin: implications for human myocilin glycosylation and signal peptide usage.</title>
        <authorList>
            <person name="Shepard A.R."/>
            <person name="Jacobson N."/>
            <person name="Sui R."/>
            <person name="Steely H.T."/>
            <person name="Lotery A.J."/>
            <person name="Stone E.M."/>
            <person name="Clark A.F."/>
        </authorList>
    </citation>
    <scope>NUCLEOTIDE SEQUENCE [MRNA]</scope>
    <scope>SUBCELLULAR LOCATION</scope>
    <scope>TISSUE SPECIFICITY</scope>
    <source>
        <tissue evidence="8">Eye</tissue>
        <tissue evidence="8">Heart</tissue>
    </source>
</reference>
<keyword id="KW-0106">Calcium</keyword>
<keyword id="KW-0966">Cell projection</keyword>
<keyword id="KW-0969">Cilium</keyword>
<keyword id="KW-0175">Coiled coil</keyword>
<keyword id="KW-0968">Cytoplasmic vesicle</keyword>
<keyword id="KW-1015">Disulfide bond</keyword>
<keyword id="KW-0256">Endoplasmic reticulum</keyword>
<keyword id="KW-0272">Extracellular matrix</keyword>
<keyword id="KW-0325">Glycoprotein</keyword>
<keyword id="KW-0333">Golgi apparatus</keyword>
<keyword id="KW-0449">Lipoprotein</keyword>
<keyword id="KW-0472">Membrane</keyword>
<keyword id="KW-0479">Metal-binding</keyword>
<keyword id="KW-0496">Mitochondrion</keyword>
<keyword id="KW-0999">Mitochondrion inner membrane</keyword>
<keyword id="KW-1000">Mitochondrion outer membrane</keyword>
<keyword id="KW-0564">Palmitate</keyword>
<keyword id="KW-1185">Reference proteome</keyword>
<keyword id="KW-0964">Secreted</keyword>
<keyword id="KW-0732">Signal</keyword>
<feature type="signal peptide" evidence="5">
    <location>
        <begin position="1"/>
        <end position="18"/>
    </location>
</feature>
<feature type="chain" id="PRO_0000020087" description="Myocilin" evidence="5">
    <location>
        <begin position="19"/>
        <end position="490"/>
    </location>
</feature>
<feature type="chain" id="PRO_0000428745" description="Myocilin, N-terminal fragment" evidence="1">
    <location>
        <begin position="19"/>
        <end position="212"/>
    </location>
</feature>
<feature type="chain" id="PRO_0000428746" description="Myocilin, C-terminal fragment" evidence="1">
    <location>
        <begin position="213"/>
        <end position="490"/>
    </location>
</feature>
<feature type="domain" description="Olfactomedin-like" evidence="6">
    <location>
        <begin position="230"/>
        <end position="489"/>
    </location>
</feature>
<feature type="region of interest" description="Disordered" evidence="7">
    <location>
        <begin position="168"/>
        <end position="187"/>
    </location>
</feature>
<feature type="coiled-coil region" evidence="5">
    <location>
        <begin position="55"/>
        <end position="170"/>
    </location>
</feature>
<feature type="short sequence motif" description="Microbody targeting signal" evidence="5">
    <location>
        <begin position="488"/>
        <end position="490"/>
    </location>
</feature>
<feature type="binding site" evidence="4">
    <location>
        <position position="366"/>
    </location>
    <ligand>
        <name>Ca(2+)</name>
        <dbReference type="ChEBI" id="CHEBI:29108"/>
    </ligand>
</feature>
<feature type="binding site" evidence="4">
    <location>
        <position position="414"/>
    </location>
    <ligand>
        <name>Ca(2+)</name>
        <dbReference type="ChEBI" id="CHEBI:29108"/>
    </ligand>
</feature>
<feature type="binding site" evidence="4">
    <location>
        <position position="415"/>
    </location>
    <ligand>
        <name>Ca(2+)</name>
        <dbReference type="ChEBI" id="CHEBI:29108"/>
    </ligand>
</feature>
<feature type="binding site" evidence="4">
    <location>
        <position position="463"/>
    </location>
    <ligand>
        <name>Ca(2+)</name>
        <dbReference type="ChEBI" id="CHEBI:29108"/>
    </ligand>
</feature>
<feature type="binding site" evidence="4">
    <location>
        <position position="464"/>
    </location>
    <ligand>
        <name>Ca(2+)</name>
        <dbReference type="ChEBI" id="CHEBI:29108"/>
    </ligand>
</feature>
<feature type="site" description="Cleavage; by CAPN2" evidence="1">
    <location>
        <begin position="212"/>
        <end position="213"/>
    </location>
</feature>
<feature type="disulfide bond" evidence="4 6">
    <location>
        <begin position="231"/>
        <end position="419"/>
    </location>
</feature>
<protein>
    <recommendedName>
        <fullName>Myocilin</fullName>
    </recommendedName>
    <alternativeName>
        <fullName>Trabecular meshwork-induced glucocorticoid response protein</fullName>
    </alternativeName>
    <component>
        <recommendedName>
            <fullName>Myocilin, N-terminal fragment</fullName>
        </recommendedName>
        <alternativeName>
            <fullName>Myocilin 20 kDa N-terminal fragment</fullName>
        </alternativeName>
    </component>
    <component>
        <recommendedName>
            <fullName>Myocilin, C-terminal fragment</fullName>
        </recommendedName>
        <alternativeName>
            <fullName>Myocilin 35 kDa N-terminal fragment</fullName>
        </alternativeName>
    </component>
</protein>
<dbReference type="EMBL" id="AY191317">
    <property type="protein sequence ID" value="AAO38666.1"/>
    <property type="molecule type" value="mRNA"/>
</dbReference>
<dbReference type="RefSeq" id="NP_001075619.1">
    <property type="nucleotide sequence ID" value="NM_001082150.2"/>
</dbReference>
<dbReference type="SMR" id="Q866N2"/>
<dbReference type="FunCoup" id="Q866N2">
    <property type="interactions" value="10"/>
</dbReference>
<dbReference type="STRING" id="9986.ENSOCUP00000013710"/>
<dbReference type="PaxDb" id="9986-ENSOCUP00000013710"/>
<dbReference type="Ensembl" id="ENSOCUT00000015953.4">
    <property type="protein sequence ID" value="ENSOCUP00000013710.3"/>
    <property type="gene ID" value="ENSOCUG00000015957.4"/>
</dbReference>
<dbReference type="GeneID" id="100008897"/>
<dbReference type="KEGG" id="ocu:100008897"/>
<dbReference type="CTD" id="4653"/>
<dbReference type="eggNOG" id="KOG3545">
    <property type="taxonomic scope" value="Eukaryota"/>
</dbReference>
<dbReference type="GeneTree" id="ENSGT00940000158561"/>
<dbReference type="HOGENOM" id="CLU_035236_4_0_1"/>
<dbReference type="InParanoid" id="Q866N2"/>
<dbReference type="OMA" id="REVSKWN"/>
<dbReference type="OrthoDB" id="8626508at2759"/>
<dbReference type="Proteomes" id="UP000001811">
    <property type="component" value="Chromosome 13"/>
</dbReference>
<dbReference type="Bgee" id="ENSOCUG00000015957">
    <property type="expression patterns" value="Expressed in skeletal muscle tissue and 11 other cell types or tissues"/>
</dbReference>
<dbReference type="GO" id="GO:0005929">
    <property type="term" value="C:cilium"/>
    <property type="evidence" value="ECO:0007669"/>
    <property type="project" value="UniProtKB-SubCell"/>
</dbReference>
<dbReference type="GO" id="GO:0062023">
    <property type="term" value="C:collagen-containing extracellular matrix"/>
    <property type="evidence" value="ECO:0000250"/>
    <property type="project" value="UniProtKB"/>
</dbReference>
<dbReference type="GO" id="GO:0031410">
    <property type="term" value="C:cytoplasmic vesicle"/>
    <property type="evidence" value="ECO:0000250"/>
    <property type="project" value="UniProtKB"/>
</dbReference>
<dbReference type="GO" id="GO:0005783">
    <property type="term" value="C:endoplasmic reticulum"/>
    <property type="evidence" value="ECO:0000250"/>
    <property type="project" value="UniProtKB"/>
</dbReference>
<dbReference type="GO" id="GO:0070062">
    <property type="term" value="C:extracellular exosome"/>
    <property type="evidence" value="ECO:0000250"/>
    <property type="project" value="UniProtKB"/>
</dbReference>
<dbReference type="GO" id="GO:0005615">
    <property type="term" value="C:extracellular space"/>
    <property type="evidence" value="ECO:0000250"/>
    <property type="project" value="UniProtKB"/>
</dbReference>
<dbReference type="GO" id="GO:0005794">
    <property type="term" value="C:Golgi apparatus"/>
    <property type="evidence" value="ECO:0000250"/>
    <property type="project" value="UniProtKB"/>
</dbReference>
<dbReference type="GO" id="GO:0005743">
    <property type="term" value="C:mitochondrial inner membrane"/>
    <property type="evidence" value="ECO:0000250"/>
    <property type="project" value="UniProtKB"/>
</dbReference>
<dbReference type="GO" id="GO:0005758">
    <property type="term" value="C:mitochondrial intermembrane space"/>
    <property type="evidence" value="ECO:0000250"/>
    <property type="project" value="UniProtKB"/>
</dbReference>
<dbReference type="GO" id="GO:0005741">
    <property type="term" value="C:mitochondrial outer membrane"/>
    <property type="evidence" value="ECO:0000250"/>
    <property type="project" value="UniProtKB"/>
</dbReference>
<dbReference type="GO" id="GO:0033268">
    <property type="term" value="C:node of Ranvier"/>
    <property type="evidence" value="ECO:0000250"/>
    <property type="project" value="UniProtKB"/>
</dbReference>
<dbReference type="GO" id="GO:0005791">
    <property type="term" value="C:rough endoplasmic reticulum"/>
    <property type="evidence" value="ECO:0007669"/>
    <property type="project" value="UniProtKB-SubCell"/>
</dbReference>
<dbReference type="GO" id="GO:0001968">
    <property type="term" value="F:fibronectin binding"/>
    <property type="evidence" value="ECO:0007669"/>
    <property type="project" value="Ensembl"/>
</dbReference>
<dbReference type="GO" id="GO:0005109">
    <property type="term" value="F:frizzled binding"/>
    <property type="evidence" value="ECO:0007669"/>
    <property type="project" value="Ensembl"/>
</dbReference>
<dbReference type="GO" id="GO:0046872">
    <property type="term" value="F:metal ion binding"/>
    <property type="evidence" value="ECO:0007669"/>
    <property type="project" value="UniProtKB-KW"/>
</dbReference>
<dbReference type="GO" id="GO:0032027">
    <property type="term" value="F:myosin light chain binding"/>
    <property type="evidence" value="ECO:0007669"/>
    <property type="project" value="Ensembl"/>
</dbReference>
<dbReference type="GO" id="GO:0030971">
    <property type="term" value="F:receptor tyrosine kinase binding"/>
    <property type="evidence" value="ECO:0007669"/>
    <property type="project" value="Ensembl"/>
</dbReference>
<dbReference type="GO" id="GO:0060348">
    <property type="term" value="P:bone development"/>
    <property type="evidence" value="ECO:0000250"/>
    <property type="project" value="UniProtKB"/>
</dbReference>
<dbReference type="GO" id="GO:0045162">
    <property type="term" value="P:clustering of voltage-gated sodium channels"/>
    <property type="evidence" value="ECO:0000250"/>
    <property type="project" value="UniProtKB"/>
</dbReference>
<dbReference type="GO" id="GO:0038133">
    <property type="term" value="P:ERBB2-ERBB3 signaling pathway"/>
    <property type="evidence" value="ECO:0000250"/>
    <property type="project" value="UniProtKB"/>
</dbReference>
<dbReference type="GO" id="GO:0022011">
    <property type="term" value="P:myelination in peripheral nervous system"/>
    <property type="evidence" value="ECO:0000250"/>
    <property type="project" value="UniProtKB"/>
</dbReference>
<dbReference type="GO" id="GO:0001953">
    <property type="term" value="P:negative regulation of cell-matrix adhesion"/>
    <property type="evidence" value="ECO:0000250"/>
    <property type="project" value="UniProtKB"/>
</dbReference>
<dbReference type="GO" id="GO:0035024">
    <property type="term" value="P:negative regulation of Rho protein signal transduction"/>
    <property type="evidence" value="ECO:0000250"/>
    <property type="project" value="UniProtKB"/>
</dbReference>
<dbReference type="GO" id="GO:0051497">
    <property type="term" value="P:negative regulation of stress fiber assembly"/>
    <property type="evidence" value="ECO:0000250"/>
    <property type="project" value="UniProtKB"/>
</dbReference>
<dbReference type="GO" id="GO:0031175">
    <property type="term" value="P:neuron projection development"/>
    <property type="evidence" value="ECO:0000250"/>
    <property type="project" value="UniProtKB"/>
</dbReference>
<dbReference type="GO" id="GO:0035567">
    <property type="term" value="P:non-canonical Wnt signaling pathway"/>
    <property type="evidence" value="ECO:0000250"/>
    <property type="project" value="UniProtKB"/>
</dbReference>
<dbReference type="GO" id="GO:0001649">
    <property type="term" value="P:osteoblast differentiation"/>
    <property type="evidence" value="ECO:0000250"/>
    <property type="project" value="UniProtKB"/>
</dbReference>
<dbReference type="GO" id="GO:0030335">
    <property type="term" value="P:positive regulation of cell migration"/>
    <property type="evidence" value="ECO:0000250"/>
    <property type="project" value="UniProtKB"/>
</dbReference>
<dbReference type="GO" id="GO:0051894">
    <property type="term" value="P:positive regulation of focal adhesion assembly"/>
    <property type="evidence" value="ECO:0000250"/>
    <property type="project" value="UniProtKB"/>
</dbReference>
<dbReference type="GO" id="GO:0046330">
    <property type="term" value="P:positive regulation of JNK cascade"/>
    <property type="evidence" value="ECO:0007669"/>
    <property type="project" value="Ensembl"/>
</dbReference>
<dbReference type="GO" id="GO:0051901">
    <property type="term" value="P:positive regulation of mitochondrial depolarization"/>
    <property type="evidence" value="ECO:0000250"/>
    <property type="project" value="UniProtKB"/>
</dbReference>
<dbReference type="GO" id="GO:0051897">
    <property type="term" value="P:positive regulation of phosphatidylinositol 3-kinase/protein kinase B signal transduction"/>
    <property type="evidence" value="ECO:0000250"/>
    <property type="project" value="UniProtKB"/>
</dbReference>
<dbReference type="GO" id="GO:0051496">
    <property type="term" value="P:positive regulation of stress fiber assembly"/>
    <property type="evidence" value="ECO:0000250"/>
    <property type="project" value="UniProtKB"/>
</dbReference>
<dbReference type="GO" id="GO:1900026">
    <property type="term" value="P:positive regulation of substrate adhesion-dependent cell spreading"/>
    <property type="evidence" value="ECO:0000250"/>
    <property type="project" value="UniProtKB"/>
</dbReference>
<dbReference type="GO" id="GO:0043408">
    <property type="term" value="P:regulation of MAPK cascade"/>
    <property type="evidence" value="ECO:0000250"/>
    <property type="project" value="UniProtKB"/>
</dbReference>
<dbReference type="GO" id="GO:0014734">
    <property type="term" value="P:skeletal muscle hypertrophy"/>
    <property type="evidence" value="ECO:0000250"/>
    <property type="project" value="UniProtKB"/>
</dbReference>
<dbReference type="GO" id="GO:0007601">
    <property type="term" value="P:visual perception"/>
    <property type="evidence" value="ECO:0000303"/>
    <property type="project" value="UniProtKB"/>
</dbReference>
<dbReference type="InterPro" id="IPR003112">
    <property type="entry name" value="Olfac-like_dom"/>
</dbReference>
<dbReference type="InterPro" id="IPR050605">
    <property type="entry name" value="Olfactomedin-like_domain"/>
</dbReference>
<dbReference type="PANTHER" id="PTHR23192:SF33">
    <property type="entry name" value="MYOCILIN"/>
    <property type="match status" value="1"/>
</dbReference>
<dbReference type="PANTHER" id="PTHR23192">
    <property type="entry name" value="OLFACTOMEDIN-RELATED"/>
    <property type="match status" value="1"/>
</dbReference>
<dbReference type="Pfam" id="PF02191">
    <property type="entry name" value="OLF"/>
    <property type="match status" value="1"/>
</dbReference>
<dbReference type="SMART" id="SM00284">
    <property type="entry name" value="OLF"/>
    <property type="match status" value="1"/>
</dbReference>
<dbReference type="PROSITE" id="PS51132">
    <property type="entry name" value="OLF"/>
    <property type="match status" value="1"/>
</dbReference>
<comment type="function">
    <text evidence="2 4">Secreted glycoprotein regulating the activation of different signaling pathways in adjacent cells to control different processes including cell adhesion, cell-matrix adhesion, cytoskeleton organization and cell migration. Promotes substrate adhesion, spreading and formation of focal contacts. Negatively regulates cell-matrix adhesion and stress fiber assembly through Rho protein signal transduction. Modulates the organization of actin cytoskeleton by stimulating the formation of stress fibers through interactions with components of Wnt signaling pathways. Promotes cell migration through activation of PTK2 and the downstream phosphatidylinositol 3-kinase signaling. Plays a role in bone formation and promotes osteoblast differentiation in a dose-dependent manner through mitogen-activated protein kinase signaling. Mediates myelination in the peripheral nervous system through ERBB2/ERBB3 signaling. Plays a role as a regulator of muscle hypertrophy through the components of dystrophin-associated protein complex. Involved in positive regulation of mitochondrial depolarization. Plays a role in neurite outgrowth. May participate in the obstruction of fluid outflow in the trabecular meshwork.</text>
</comment>
<comment type="subunit">
    <text evidence="2 4">Homodimer (via N-terminus). Can also form higher oligomers. Interacts with OLFM3, FN1, NRCAM, GLDN and NFASC. Interacts (via N-terminus) with MYL2. Interacts with SFRP1, FRZB, FZD7, FZD10, FZD1 and WIF1; regulates Wnt signaling (By similarity). Interacts with SNTA1; regulates muscle hypertrophy. Interacts with ERBB2 and ERBB3; activates ERBB2-ERBB3 signaling pathway. Interacts with SNCG; affects its secretion and its aggregation (By similarity).</text>
</comment>
<comment type="subcellular location">
    <subcellularLocation>
        <location evidence="8">Secreted</location>
    </subcellularLocation>
    <subcellularLocation>
        <location evidence="4">Golgi apparatus</location>
    </subcellularLocation>
    <subcellularLocation>
        <location evidence="4">Cytoplasmic vesicle</location>
    </subcellularLocation>
    <subcellularLocation>
        <location evidence="4">Secreted</location>
        <location evidence="4">Extracellular space</location>
    </subcellularLocation>
    <subcellularLocation>
        <location evidence="4">Secreted</location>
        <location evidence="4">Extracellular space</location>
        <location evidence="4">Extracellular matrix</location>
    </subcellularLocation>
    <subcellularLocation>
        <location evidence="4">Secreted</location>
        <location evidence="4">Extracellular exosome</location>
    </subcellularLocation>
    <subcellularLocation>
        <location evidence="4">Mitochondrion</location>
    </subcellularLocation>
    <subcellularLocation>
        <location evidence="4">Mitochondrion intermembrane space</location>
    </subcellularLocation>
    <subcellularLocation>
        <location evidence="4">Mitochondrion inner membrane</location>
    </subcellularLocation>
    <subcellularLocation>
        <location evidence="4">Mitochondrion outer membrane</location>
    </subcellularLocation>
    <subcellularLocation>
        <location evidence="4">Rough endoplasmic reticulum</location>
    </subcellularLocation>
    <subcellularLocation>
        <location evidence="4">Cell projection</location>
    </subcellularLocation>
    <subcellularLocation>
        <location evidence="4">Cell projection</location>
        <location evidence="4">Cilium</location>
    </subcellularLocation>
    <text evidence="4">Located preferentially in the ciliary rootlet and basal body of the connecting cilium of photoreceptor cells, and in the rough endoplasmic reticulum. It is only imported to mitochondria in the trabecular meshwork. Localizes to the Golgi apparatus in Schlemm's canal endothelial cells. Appears in the extracellular space of trabecular meshwork cells by an unconventional mechanism, likely associated with exosome-like vesicles. Localizes in trabecular meshwork extracellular matrix.</text>
</comment>
<comment type="subcellular location">
    <molecule>Myocilin, C-terminal fragment</molecule>
    <subcellularLocation>
        <location evidence="1">Secreted</location>
    </subcellularLocation>
</comment>
<comment type="subcellular location">
    <molecule>Myocilin, N-terminal fragment</molecule>
    <subcellularLocation>
        <location>Endoplasmic reticulum</location>
    </subcellularLocation>
    <text evidence="1">Remains retained in the endoplasmic reticulum.</text>
</comment>
<comment type="tissue specificity">
    <text evidence="8">Detected in eye aqueous humor (at protein level).</text>
</comment>
<comment type="PTM">
    <text evidence="3">Palmitoylated.</text>
</comment>
<comment type="PTM">
    <text evidence="8">Glycosylated.</text>
</comment>
<comment type="PTM">
    <text evidence="1">Undergoes a calcium-dependent proteolytic cleavage at Arg-212 by CAPN2 in the endoplasmic reticulum. The result is the production of two fragments, one of 35 kDa containing the C-terminal olfactomedin-like domain, and another of 20 kDa containing the N-terminal leucine zipper-like domain (By similarity).</text>
</comment>
<evidence type="ECO:0000250" key="1"/>
<evidence type="ECO:0000250" key="2">
    <source>
        <dbReference type="UniProtKB" id="O70624"/>
    </source>
</evidence>
<evidence type="ECO:0000250" key="3">
    <source>
        <dbReference type="UniProtKB" id="Q2PT31"/>
    </source>
</evidence>
<evidence type="ECO:0000250" key="4">
    <source>
        <dbReference type="UniProtKB" id="Q99972"/>
    </source>
</evidence>
<evidence type="ECO:0000255" key="5"/>
<evidence type="ECO:0000255" key="6">
    <source>
        <dbReference type="PROSITE-ProRule" id="PRU00446"/>
    </source>
</evidence>
<evidence type="ECO:0000256" key="7">
    <source>
        <dbReference type="SAM" id="MobiDB-lite"/>
    </source>
</evidence>
<evidence type="ECO:0000269" key="8">
    <source>
    </source>
</evidence>
<evidence type="ECO:0000305" key="9"/>
<evidence type="ECO:0000312" key="10">
    <source>
        <dbReference type="EMBL" id="AAO38666.1"/>
    </source>
</evidence>
<accession>Q866N2</accession>
<name>MYOC_RABIT</name>
<sequence>MPAVQLLLLAGLVWGAGARTAQLRKANDRSGRCQYTFSVASPSESSCPEQGQTMSAIQDLQRDSSTQRADLESTKARLSSLESLLHRLTLAQTSGPQEIQEELQKELGTLRRERDQLESQTRELEAAYSNLLRDKSALEEEKRRLMQENEDLARRLESSSQEVARLARGQCPQARDTSQDVPAGSREASQWNLDTLAFQELKSELTEVPASRILKENPPVLPRGEEGDNGCGELVWVGQPVTLRTAETITGKYGVWMRDPKPTSPHTQETTWRIDTVGTDIRQVFEYDRISQFVQGYPSKVYVLPRSLESTGAVVYAGSLYFQGAGSRTVIRFELNTETVKAEKEIPGAGYRGQFPYSWGGYTDIDLAVDETGLWVIYSTEEARGAIVLSKLNPENLELEKTWETNIRKQSVANAFIICGTLYTVSSYSSADATVNFAYDTGTGISKPLAIPFKNRYKYSSMIDYNPLERKLFAWDSFNMVTYDIKLSKI</sequence>
<proteinExistence type="evidence at protein level"/>
<organism>
    <name type="scientific">Oryctolagus cuniculus</name>
    <name type="common">Rabbit</name>
    <dbReference type="NCBI Taxonomy" id="9986"/>
    <lineage>
        <taxon>Eukaryota</taxon>
        <taxon>Metazoa</taxon>
        <taxon>Chordata</taxon>
        <taxon>Craniata</taxon>
        <taxon>Vertebrata</taxon>
        <taxon>Euteleostomi</taxon>
        <taxon>Mammalia</taxon>
        <taxon>Eutheria</taxon>
        <taxon>Euarchontoglires</taxon>
        <taxon>Glires</taxon>
        <taxon>Lagomorpha</taxon>
        <taxon>Leporidae</taxon>
        <taxon>Oryctolagus</taxon>
    </lineage>
</organism>